<dbReference type="EC" id="2.3.1.31" evidence="1"/>
<dbReference type="EMBL" id="CP000697">
    <property type="protein sequence ID" value="ABQ29662.1"/>
    <property type="molecule type" value="Genomic_DNA"/>
</dbReference>
<dbReference type="SMR" id="A5FVN0"/>
<dbReference type="STRING" id="349163.Acry_0437"/>
<dbReference type="ESTHER" id="acicj-metx">
    <property type="family name" value="Homoserine_transacetylase"/>
</dbReference>
<dbReference type="KEGG" id="acr:Acry_0437"/>
<dbReference type="eggNOG" id="COG2021">
    <property type="taxonomic scope" value="Bacteria"/>
</dbReference>
<dbReference type="HOGENOM" id="CLU_028760_1_2_5"/>
<dbReference type="UniPathway" id="UPA00051">
    <property type="reaction ID" value="UER00074"/>
</dbReference>
<dbReference type="Proteomes" id="UP000000245">
    <property type="component" value="Chromosome"/>
</dbReference>
<dbReference type="GO" id="GO:0005737">
    <property type="term" value="C:cytoplasm"/>
    <property type="evidence" value="ECO:0007669"/>
    <property type="project" value="UniProtKB-SubCell"/>
</dbReference>
<dbReference type="GO" id="GO:0004414">
    <property type="term" value="F:homoserine O-acetyltransferase activity"/>
    <property type="evidence" value="ECO:0007669"/>
    <property type="project" value="UniProtKB-UniRule"/>
</dbReference>
<dbReference type="GO" id="GO:0009092">
    <property type="term" value="P:homoserine metabolic process"/>
    <property type="evidence" value="ECO:0007669"/>
    <property type="project" value="TreeGrafter"/>
</dbReference>
<dbReference type="GO" id="GO:0009086">
    <property type="term" value="P:methionine biosynthetic process"/>
    <property type="evidence" value="ECO:0007669"/>
    <property type="project" value="UniProtKB-UniRule"/>
</dbReference>
<dbReference type="FunFam" id="1.10.1740.110:FF:000001">
    <property type="entry name" value="Homoserine O-acetyltransferase"/>
    <property type="match status" value="1"/>
</dbReference>
<dbReference type="Gene3D" id="1.10.1740.110">
    <property type="match status" value="1"/>
</dbReference>
<dbReference type="Gene3D" id="3.40.50.1820">
    <property type="entry name" value="alpha/beta hydrolase"/>
    <property type="match status" value="1"/>
</dbReference>
<dbReference type="HAMAP" id="MF_00296">
    <property type="entry name" value="MetX_acyltransf"/>
    <property type="match status" value="1"/>
</dbReference>
<dbReference type="InterPro" id="IPR000073">
    <property type="entry name" value="AB_hydrolase_1"/>
</dbReference>
<dbReference type="InterPro" id="IPR029058">
    <property type="entry name" value="AB_hydrolase_fold"/>
</dbReference>
<dbReference type="InterPro" id="IPR008220">
    <property type="entry name" value="HAT_MetX-like"/>
</dbReference>
<dbReference type="NCBIfam" id="TIGR01392">
    <property type="entry name" value="homoserO_Ac_trn"/>
    <property type="match status" value="1"/>
</dbReference>
<dbReference type="NCBIfam" id="NF001209">
    <property type="entry name" value="PRK00175.1"/>
    <property type="match status" value="1"/>
</dbReference>
<dbReference type="PANTHER" id="PTHR32268">
    <property type="entry name" value="HOMOSERINE O-ACETYLTRANSFERASE"/>
    <property type="match status" value="1"/>
</dbReference>
<dbReference type="PANTHER" id="PTHR32268:SF11">
    <property type="entry name" value="HOMOSERINE O-ACETYLTRANSFERASE"/>
    <property type="match status" value="1"/>
</dbReference>
<dbReference type="Pfam" id="PF00561">
    <property type="entry name" value="Abhydrolase_1"/>
    <property type="match status" value="1"/>
</dbReference>
<dbReference type="PIRSF" id="PIRSF000443">
    <property type="entry name" value="Homoser_Ac_trans"/>
    <property type="match status" value="1"/>
</dbReference>
<dbReference type="SUPFAM" id="SSF53474">
    <property type="entry name" value="alpha/beta-Hydrolases"/>
    <property type="match status" value="1"/>
</dbReference>
<keyword id="KW-0012">Acyltransferase</keyword>
<keyword id="KW-0028">Amino-acid biosynthesis</keyword>
<keyword id="KW-0963">Cytoplasm</keyword>
<keyword id="KW-0486">Methionine biosynthesis</keyword>
<keyword id="KW-1185">Reference proteome</keyword>
<keyword id="KW-0808">Transferase</keyword>
<name>METXA_ACICJ</name>
<sequence>MDQSPFPDIAHQTASFSDGLVLDCGTTLQRLEVAYRTYGSLNAEKSNAILICHALTGDQYVAEPHPLTGKPGWWNALVGAGKPVDTDRFFVICANVLGGCMGSTGPRSRRDHGADEPWSIDFPAITVQDMVRAQKKLVDWLGIERLFAVVGGSMGGMQVLAWASLFPDRVFAAVPIATAPYHSAQNIAFHEVGRQAIYTDPDFHGGHYRTHGVIPARGLAVARMTAHITYLSEAALTRKFGRRLQRQNALAAPVFGERFAVESYLEHQGSSFVRRFDANSYLVITRAMDYFDLAADHGGSLSAAFRGTKTRFLLVSFSSDWLFPTAESRAMARALNQVAANVSFVEIVSDKGHDAFLLDEPDFHRTVAGFISGAAEAAGLQ</sequence>
<comment type="function">
    <text evidence="1">Transfers an acetyl group from acetyl-CoA to L-homoserine, forming acetyl-L-homoserine.</text>
</comment>
<comment type="catalytic activity">
    <reaction evidence="1">
        <text>L-homoserine + acetyl-CoA = O-acetyl-L-homoserine + CoA</text>
        <dbReference type="Rhea" id="RHEA:13701"/>
        <dbReference type="ChEBI" id="CHEBI:57287"/>
        <dbReference type="ChEBI" id="CHEBI:57288"/>
        <dbReference type="ChEBI" id="CHEBI:57476"/>
        <dbReference type="ChEBI" id="CHEBI:57716"/>
        <dbReference type="EC" id="2.3.1.31"/>
    </reaction>
</comment>
<comment type="pathway">
    <text evidence="1">Amino-acid biosynthesis; L-methionine biosynthesis via de novo pathway; O-acetyl-L-homoserine from L-homoserine: step 1/1.</text>
</comment>
<comment type="subunit">
    <text evidence="1">Homodimer.</text>
</comment>
<comment type="subcellular location">
    <subcellularLocation>
        <location evidence="1">Cytoplasm</location>
    </subcellularLocation>
</comment>
<comment type="similarity">
    <text evidence="1">Belongs to the AB hydrolase superfamily. MetX family.</text>
</comment>
<organism>
    <name type="scientific">Acidiphilium cryptum (strain JF-5)</name>
    <dbReference type="NCBI Taxonomy" id="349163"/>
    <lineage>
        <taxon>Bacteria</taxon>
        <taxon>Pseudomonadati</taxon>
        <taxon>Pseudomonadota</taxon>
        <taxon>Alphaproteobacteria</taxon>
        <taxon>Acetobacterales</taxon>
        <taxon>Acidocellaceae</taxon>
        <taxon>Acidiphilium</taxon>
    </lineage>
</organism>
<reference key="1">
    <citation type="submission" date="2007-05" db="EMBL/GenBank/DDBJ databases">
        <title>Complete sequence of chromosome of Acidiphilium cryptum JF-5.</title>
        <authorList>
            <consortium name="US DOE Joint Genome Institute"/>
            <person name="Copeland A."/>
            <person name="Lucas S."/>
            <person name="Lapidus A."/>
            <person name="Barry K."/>
            <person name="Detter J.C."/>
            <person name="Glavina del Rio T."/>
            <person name="Hammon N."/>
            <person name="Israni S."/>
            <person name="Dalin E."/>
            <person name="Tice H."/>
            <person name="Pitluck S."/>
            <person name="Sims D."/>
            <person name="Brettin T."/>
            <person name="Bruce D."/>
            <person name="Han C."/>
            <person name="Schmutz J."/>
            <person name="Larimer F."/>
            <person name="Land M."/>
            <person name="Hauser L."/>
            <person name="Kyrpides N."/>
            <person name="Kim E."/>
            <person name="Magnuson T."/>
            <person name="Richardson P."/>
        </authorList>
    </citation>
    <scope>NUCLEOTIDE SEQUENCE [LARGE SCALE GENOMIC DNA]</scope>
    <source>
        <strain>JF-5</strain>
    </source>
</reference>
<accession>A5FVN0</accession>
<gene>
    <name evidence="1" type="primary">metXA</name>
    <name type="ordered locus">Acry_0437</name>
</gene>
<feature type="chain" id="PRO_1000021864" description="Homoserine O-acetyltransferase">
    <location>
        <begin position="1"/>
        <end position="381"/>
    </location>
</feature>
<feature type="domain" description="AB hydrolase-1" evidence="1">
    <location>
        <begin position="47"/>
        <end position="359"/>
    </location>
</feature>
<feature type="active site" description="Nucleophile" evidence="1">
    <location>
        <position position="153"/>
    </location>
</feature>
<feature type="active site" evidence="1">
    <location>
        <position position="320"/>
    </location>
</feature>
<feature type="active site" evidence="1">
    <location>
        <position position="353"/>
    </location>
</feature>
<feature type="binding site" evidence="1">
    <location>
        <position position="223"/>
    </location>
    <ligand>
        <name>substrate</name>
    </ligand>
</feature>
<feature type="binding site" evidence="1">
    <location>
        <position position="354"/>
    </location>
    <ligand>
        <name>substrate</name>
    </ligand>
</feature>
<proteinExistence type="inferred from homology"/>
<evidence type="ECO:0000255" key="1">
    <source>
        <dbReference type="HAMAP-Rule" id="MF_00296"/>
    </source>
</evidence>
<protein>
    <recommendedName>
        <fullName evidence="1">Homoserine O-acetyltransferase</fullName>
        <shortName evidence="1">HAT</shortName>
        <ecNumber evidence="1">2.3.1.31</ecNumber>
    </recommendedName>
    <alternativeName>
        <fullName evidence="1">Homoserine transacetylase</fullName>
        <shortName evidence="1">HTA</shortName>
    </alternativeName>
</protein>